<comment type="function">
    <text evidence="1">One of the primary rRNA binding proteins, it binds specifically to the 5'-end of 16S ribosomal RNA.</text>
</comment>
<comment type="subunit">
    <text evidence="1">Part of the 30S ribosomal subunit.</text>
</comment>
<comment type="similarity">
    <text evidence="1">Belongs to the universal ribosomal protein uS17 family.</text>
</comment>
<feature type="chain" id="PRO_0000233432" description="Small ribosomal subunit protein uS17">
    <location>
        <begin position="1"/>
        <end position="86"/>
    </location>
</feature>
<dbReference type="EMBL" id="AE014295">
    <property type="protein sequence ID" value="AAN25378.1"/>
    <property type="molecule type" value="Genomic_DNA"/>
</dbReference>
<dbReference type="RefSeq" id="NP_696742.1">
    <property type="nucleotide sequence ID" value="NC_004307.2"/>
</dbReference>
<dbReference type="RefSeq" id="WP_007055338.1">
    <property type="nucleotide sequence ID" value="NC_004307.2"/>
</dbReference>
<dbReference type="SMR" id="Q8G409"/>
<dbReference type="STRING" id="206672.BL1589"/>
<dbReference type="EnsemblBacteria" id="AAN25378">
    <property type="protein sequence ID" value="AAN25378"/>
    <property type="gene ID" value="BL1589"/>
</dbReference>
<dbReference type="GeneID" id="69578888"/>
<dbReference type="KEGG" id="blo:BL1589"/>
<dbReference type="PATRIC" id="fig|206672.9.peg.1644"/>
<dbReference type="HOGENOM" id="CLU_073626_1_0_11"/>
<dbReference type="OrthoDB" id="9811714at2"/>
<dbReference type="PhylomeDB" id="Q8G409"/>
<dbReference type="PRO" id="PR:Q8G409"/>
<dbReference type="Proteomes" id="UP000000439">
    <property type="component" value="Chromosome"/>
</dbReference>
<dbReference type="GO" id="GO:0022627">
    <property type="term" value="C:cytosolic small ribosomal subunit"/>
    <property type="evidence" value="ECO:0007669"/>
    <property type="project" value="TreeGrafter"/>
</dbReference>
<dbReference type="GO" id="GO:0019843">
    <property type="term" value="F:rRNA binding"/>
    <property type="evidence" value="ECO:0007669"/>
    <property type="project" value="UniProtKB-UniRule"/>
</dbReference>
<dbReference type="GO" id="GO:0003735">
    <property type="term" value="F:structural constituent of ribosome"/>
    <property type="evidence" value="ECO:0007669"/>
    <property type="project" value="InterPro"/>
</dbReference>
<dbReference type="GO" id="GO:0006412">
    <property type="term" value="P:translation"/>
    <property type="evidence" value="ECO:0007669"/>
    <property type="project" value="UniProtKB-UniRule"/>
</dbReference>
<dbReference type="CDD" id="cd00364">
    <property type="entry name" value="Ribosomal_uS17"/>
    <property type="match status" value="1"/>
</dbReference>
<dbReference type="Gene3D" id="2.40.50.140">
    <property type="entry name" value="Nucleic acid-binding proteins"/>
    <property type="match status" value="1"/>
</dbReference>
<dbReference type="HAMAP" id="MF_01345_B">
    <property type="entry name" value="Ribosomal_uS17_B"/>
    <property type="match status" value="1"/>
</dbReference>
<dbReference type="InterPro" id="IPR012340">
    <property type="entry name" value="NA-bd_OB-fold"/>
</dbReference>
<dbReference type="InterPro" id="IPR000266">
    <property type="entry name" value="Ribosomal_uS17"/>
</dbReference>
<dbReference type="InterPro" id="IPR019984">
    <property type="entry name" value="Ribosomal_uS17_bact/chlr"/>
</dbReference>
<dbReference type="InterPro" id="IPR019979">
    <property type="entry name" value="Ribosomal_uS17_CS"/>
</dbReference>
<dbReference type="NCBIfam" id="NF004123">
    <property type="entry name" value="PRK05610.1"/>
    <property type="match status" value="1"/>
</dbReference>
<dbReference type="NCBIfam" id="TIGR03635">
    <property type="entry name" value="uS17_bact"/>
    <property type="match status" value="1"/>
</dbReference>
<dbReference type="PANTHER" id="PTHR10744">
    <property type="entry name" value="40S RIBOSOMAL PROTEIN S11 FAMILY MEMBER"/>
    <property type="match status" value="1"/>
</dbReference>
<dbReference type="PANTHER" id="PTHR10744:SF1">
    <property type="entry name" value="SMALL RIBOSOMAL SUBUNIT PROTEIN US17M"/>
    <property type="match status" value="1"/>
</dbReference>
<dbReference type="Pfam" id="PF00366">
    <property type="entry name" value="Ribosomal_S17"/>
    <property type="match status" value="1"/>
</dbReference>
<dbReference type="PRINTS" id="PR00973">
    <property type="entry name" value="RIBOSOMALS17"/>
</dbReference>
<dbReference type="SUPFAM" id="SSF50249">
    <property type="entry name" value="Nucleic acid-binding proteins"/>
    <property type="match status" value="1"/>
</dbReference>
<dbReference type="PROSITE" id="PS00056">
    <property type="entry name" value="RIBOSOMAL_S17"/>
    <property type="match status" value="1"/>
</dbReference>
<reference key="1">
    <citation type="journal article" date="2002" name="Proc. Natl. Acad. Sci. U.S.A.">
        <title>The genome sequence of Bifidobacterium longum reflects its adaptation to the human gastrointestinal tract.</title>
        <authorList>
            <person name="Schell M.A."/>
            <person name="Karmirantzou M."/>
            <person name="Snel B."/>
            <person name="Vilanova D."/>
            <person name="Berger B."/>
            <person name="Pessi G."/>
            <person name="Zwahlen M.-C."/>
            <person name="Desiere F."/>
            <person name="Bork P."/>
            <person name="Delley M."/>
            <person name="Pridmore R.D."/>
            <person name="Arigoni F."/>
        </authorList>
    </citation>
    <scope>NUCLEOTIDE SEQUENCE [LARGE SCALE GENOMIC DNA]</scope>
    <source>
        <strain>NCC 2705</strain>
    </source>
</reference>
<keyword id="KW-1185">Reference proteome</keyword>
<keyword id="KW-0687">Ribonucleoprotein</keyword>
<keyword id="KW-0689">Ribosomal protein</keyword>
<keyword id="KW-0694">RNA-binding</keyword>
<keyword id="KW-0699">rRNA-binding</keyword>
<accession>Q8G409</accession>
<proteinExistence type="inferred from homology"/>
<organism>
    <name type="scientific">Bifidobacterium longum (strain NCC 2705)</name>
    <dbReference type="NCBI Taxonomy" id="206672"/>
    <lineage>
        <taxon>Bacteria</taxon>
        <taxon>Bacillati</taxon>
        <taxon>Actinomycetota</taxon>
        <taxon>Actinomycetes</taxon>
        <taxon>Bifidobacteriales</taxon>
        <taxon>Bifidobacteriaceae</taxon>
        <taxon>Bifidobacterium</taxon>
    </lineage>
</organism>
<name>RS17_BIFLO</name>
<sequence>MAEERNFRKVRRGYVVSDKMDKTITVELEQRSTHPLYGKVVRSTSKVKAHDEHNDAHIGDLVSIMETRPLSKTKRWRLESIIERAK</sequence>
<evidence type="ECO:0000255" key="1">
    <source>
        <dbReference type="HAMAP-Rule" id="MF_01345"/>
    </source>
</evidence>
<evidence type="ECO:0000305" key="2"/>
<protein>
    <recommendedName>
        <fullName evidence="1">Small ribosomal subunit protein uS17</fullName>
    </recommendedName>
    <alternativeName>
        <fullName evidence="2">30S ribosomal protein S17</fullName>
    </alternativeName>
</protein>
<gene>
    <name evidence="1" type="primary">rpsQ</name>
    <name type="ordered locus">BL1589</name>
</gene>